<gene>
    <name evidence="1" type="primary">thrB</name>
    <name type="ordered locus">CLH_2638</name>
</gene>
<dbReference type="EC" id="2.7.1.39" evidence="1"/>
<dbReference type="EMBL" id="CP001078">
    <property type="protein sequence ID" value="ACD51639.1"/>
    <property type="molecule type" value="Genomic_DNA"/>
</dbReference>
<dbReference type="RefSeq" id="WP_003374429.1">
    <property type="nucleotide sequence ID" value="NC_010723.1"/>
</dbReference>
<dbReference type="SMR" id="B2UX33"/>
<dbReference type="KEGG" id="cbt:CLH_2638"/>
<dbReference type="HOGENOM" id="CLU_041243_0_0_9"/>
<dbReference type="UniPathway" id="UPA00050">
    <property type="reaction ID" value="UER00064"/>
</dbReference>
<dbReference type="GO" id="GO:0005737">
    <property type="term" value="C:cytoplasm"/>
    <property type="evidence" value="ECO:0007669"/>
    <property type="project" value="UniProtKB-SubCell"/>
</dbReference>
<dbReference type="GO" id="GO:0005524">
    <property type="term" value="F:ATP binding"/>
    <property type="evidence" value="ECO:0007669"/>
    <property type="project" value="UniProtKB-UniRule"/>
</dbReference>
<dbReference type="GO" id="GO:0004413">
    <property type="term" value="F:homoserine kinase activity"/>
    <property type="evidence" value="ECO:0007669"/>
    <property type="project" value="UniProtKB-UniRule"/>
</dbReference>
<dbReference type="GO" id="GO:0009088">
    <property type="term" value="P:threonine biosynthetic process"/>
    <property type="evidence" value="ECO:0007669"/>
    <property type="project" value="UniProtKB-UniRule"/>
</dbReference>
<dbReference type="Gene3D" id="3.30.230.10">
    <property type="match status" value="1"/>
</dbReference>
<dbReference type="Gene3D" id="3.30.70.890">
    <property type="entry name" value="GHMP kinase, C-terminal domain"/>
    <property type="match status" value="1"/>
</dbReference>
<dbReference type="HAMAP" id="MF_00384">
    <property type="entry name" value="Homoser_kinase"/>
    <property type="match status" value="1"/>
</dbReference>
<dbReference type="InterPro" id="IPR013750">
    <property type="entry name" value="GHMP_kinase_C_dom"/>
</dbReference>
<dbReference type="InterPro" id="IPR036554">
    <property type="entry name" value="GHMP_kinase_C_sf"/>
</dbReference>
<dbReference type="InterPro" id="IPR006204">
    <property type="entry name" value="GHMP_kinase_N_dom"/>
</dbReference>
<dbReference type="InterPro" id="IPR006203">
    <property type="entry name" value="GHMP_knse_ATP-bd_CS"/>
</dbReference>
<dbReference type="InterPro" id="IPR000870">
    <property type="entry name" value="Homoserine_kinase"/>
</dbReference>
<dbReference type="InterPro" id="IPR020568">
    <property type="entry name" value="Ribosomal_Su5_D2-typ_SF"/>
</dbReference>
<dbReference type="InterPro" id="IPR014721">
    <property type="entry name" value="Ribsml_uS5_D2-typ_fold_subgr"/>
</dbReference>
<dbReference type="NCBIfam" id="TIGR00191">
    <property type="entry name" value="thrB"/>
    <property type="match status" value="1"/>
</dbReference>
<dbReference type="PANTHER" id="PTHR20861:SF1">
    <property type="entry name" value="HOMOSERINE KINASE"/>
    <property type="match status" value="1"/>
</dbReference>
<dbReference type="PANTHER" id="PTHR20861">
    <property type="entry name" value="HOMOSERINE/4-DIPHOSPHOCYTIDYL-2-C-METHYL-D-ERYTHRITOL KINASE"/>
    <property type="match status" value="1"/>
</dbReference>
<dbReference type="Pfam" id="PF08544">
    <property type="entry name" value="GHMP_kinases_C"/>
    <property type="match status" value="1"/>
</dbReference>
<dbReference type="Pfam" id="PF00288">
    <property type="entry name" value="GHMP_kinases_N"/>
    <property type="match status" value="1"/>
</dbReference>
<dbReference type="PIRSF" id="PIRSF000676">
    <property type="entry name" value="Homoser_kin"/>
    <property type="match status" value="1"/>
</dbReference>
<dbReference type="PRINTS" id="PR00958">
    <property type="entry name" value="HOMSERKINASE"/>
</dbReference>
<dbReference type="SUPFAM" id="SSF55060">
    <property type="entry name" value="GHMP Kinase, C-terminal domain"/>
    <property type="match status" value="1"/>
</dbReference>
<dbReference type="SUPFAM" id="SSF54211">
    <property type="entry name" value="Ribosomal protein S5 domain 2-like"/>
    <property type="match status" value="1"/>
</dbReference>
<dbReference type="PROSITE" id="PS00627">
    <property type="entry name" value="GHMP_KINASES_ATP"/>
    <property type="match status" value="1"/>
</dbReference>
<sequence length="298" mass="32978">MIKVRVPATSANMGPGFDSIGMAVTLYNEFAFKEINTGLKFNGIPEEFCNEDNIIYEAMKYCFDKADYKFKGLEISVLKQDIPISRGLGSSSSCIVGGLIGANEILGGKFSKDELLEMAVEIEGHPDNVAPALFGGIVVAIIENNKTVYNKIDIKNKVKFITIVPDFRLSTEKARQVLPKQISRADGIYNIGRAALMISCFLTDRYDLIRSACNDALHQNYRKELIPHFDDVYNKCYELGALGCYLSGAGPTIMAIIDNGAESFSNNIKQYLKDKDIKWRVLELQADNKGAVLIKGDC</sequence>
<name>KHSE_CLOBA</name>
<organism>
    <name type="scientific">Clostridium botulinum (strain Alaska E43 / Type E3)</name>
    <dbReference type="NCBI Taxonomy" id="508767"/>
    <lineage>
        <taxon>Bacteria</taxon>
        <taxon>Bacillati</taxon>
        <taxon>Bacillota</taxon>
        <taxon>Clostridia</taxon>
        <taxon>Eubacteriales</taxon>
        <taxon>Clostridiaceae</taxon>
        <taxon>Clostridium</taxon>
    </lineage>
</organism>
<evidence type="ECO:0000255" key="1">
    <source>
        <dbReference type="HAMAP-Rule" id="MF_00384"/>
    </source>
</evidence>
<feature type="chain" id="PRO_1000122410" description="Homoserine kinase">
    <location>
        <begin position="1"/>
        <end position="298"/>
    </location>
</feature>
<feature type="binding site" evidence="1">
    <location>
        <begin position="83"/>
        <end position="93"/>
    </location>
    <ligand>
        <name>ATP</name>
        <dbReference type="ChEBI" id="CHEBI:30616"/>
    </ligand>
</feature>
<reference key="1">
    <citation type="submission" date="2008-05" db="EMBL/GenBank/DDBJ databases">
        <title>Complete genome sequence of Clostridium botulinum E3 str. Alaska E43.</title>
        <authorList>
            <person name="Brinkac L.M."/>
            <person name="Brown J.L."/>
            <person name="Bruce D."/>
            <person name="Detter C."/>
            <person name="Munk C."/>
            <person name="Smith L.A."/>
            <person name="Smith T.J."/>
            <person name="Sutton G."/>
            <person name="Brettin T.S."/>
        </authorList>
    </citation>
    <scope>NUCLEOTIDE SEQUENCE [LARGE SCALE GENOMIC DNA]</scope>
    <source>
        <strain>Alaska E43 / Type E3</strain>
    </source>
</reference>
<comment type="function">
    <text evidence="1">Catalyzes the ATP-dependent phosphorylation of L-homoserine to L-homoserine phosphate.</text>
</comment>
<comment type="catalytic activity">
    <reaction evidence="1">
        <text>L-homoserine + ATP = O-phospho-L-homoserine + ADP + H(+)</text>
        <dbReference type="Rhea" id="RHEA:13985"/>
        <dbReference type="ChEBI" id="CHEBI:15378"/>
        <dbReference type="ChEBI" id="CHEBI:30616"/>
        <dbReference type="ChEBI" id="CHEBI:57476"/>
        <dbReference type="ChEBI" id="CHEBI:57590"/>
        <dbReference type="ChEBI" id="CHEBI:456216"/>
        <dbReference type="EC" id="2.7.1.39"/>
    </reaction>
</comment>
<comment type="pathway">
    <text evidence="1">Amino-acid biosynthesis; L-threonine biosynthesis; L-threonine from L-aspartate: step 4/5.</text>
</comment>
<comment type="subcellular location">
    <subcellularLocation>
        <location evidence="1">Cytoplasm</location>
    </subcellularLocation>
</comment>
<comment type="similarity">
    <text evidence="1">Belongs to the GHMP kinase family. Homoserine kinase subfamily.</text>
</comment>
<protein>
    <recommendedName>
        <fullName evidence="1">Homoserine kinase</fullName>
        <shortName evidence="1">HK</shortName>
        <shortName evidence="1">HSK</shortName>
        <ecNumber evidence="1">2.7.1.39</ecNumber>
    </recommendedName>
</protein>
<proteinExistence type="inferred from homology"/>
<keyword id="KW-0028">Amino-acid biosynthesis</keyword>
<keyword id="KW-0067">ATP-binding</keyword>
<keyword id="KW-0963">Cytoplasm</keyword>
<keyword id="KW-0418">Kinase</keyword>
<keyword id="KW-0547">Nucleotide-binding</keyword>
<keyword id="KW-0791">Threonine biosynthesis</keyword>
<keyword id="KW-0808">Transferase</keyword>
<accession>B2UX33</accession>